<proteinExistence type="evidence at protein level"/>
<comment type="function">
    <text evidence="8">May be involved in transcriptional regulation.</text>
</comment>
<comment type="subcellular location">
    <subcellularLocation>
        <location evidence="8">Nucleus</location>
    </subcellularLocation>
</comment>
<comment type="alternative products">
    <event type="alternative splicing"/>
    <isoform>
        <id>Q9Z2U2-1</id>
        <name evidence="6">1</name>
        <sequence type="displayed"/>
    </isoform>
    <isoform>
        <id>Q9Z2U2-2</id>
        <name evidence="6">2</name>
        <sequence type="described" ref="VSP_053207"/>
    </isoform>
</comment>
<comment type="tissue specificity">
    <text evidence="5">Expressed in postnatal day 1 (P1) pituitary. Also detected in presomatotrophic cell line GHFT1-5.</text>
</comment>
<comment type="similarity">
    <text evidence="2">Belongs to the krueppel C2H2-type zinc-finger protein family.</text>
</comment>
<comment type="sequence caution" evidence="8">
    <conflict type="erroneous initiation">
        <sequence resource="EMBL-CDS" id="AAD01625"/>
    </conflict>
</comment>
<comment type="sequence caution" evidence="8">
    <conflict type="miscellaneous discrepancy">
        <sequence resource="EMBL-CDS" id="AAH36997"/>
    </conflict>
    <text>Contaminating sequence. Potential poly-A sequence.</text>
</comment>
<comment type="sequence caution" evidence="8">
    <conflict type="erroneous initiation">
        <sequence resource="EMBL-CDS" id="BAC28892"/>
    </conflict>
</comment>
<comment type="sequence caution" evidence="8">
    <conflict type="erroneous initiation">
        <sequence resource="EMBL-CDS" id="BAC32648"/>
    </conflict>
</comment>
<sequence>MADDEAEQERLSGGGCAAELRRLGERLQELERRLCESREPAVEAAAAYCRQLCQTLLEYAEKWKTSEDPLPLLEVYTVAIQSYVKARPYLTSECESVALVLERLALSCVELLLCLPVELSDKQWEQFQTLVQVAHETLMESGSCELQFLATLAQETGVWKNAVLSTILSQEPLDKEKVNEFLAFEGPILLDMRIKHLIKTNQLSQATALAKLCSDHPEIGTKGSFKQTYLVCLCTSSPSEKLIEEISEVDCKDALEMICNLESEGDEKSALVLCTAFLSRQLQQGDMYCAWELTLFWSKLQQRVEPSVQVYLERCRQLSLLTKTVYHIFFLIKVINSETEGAGLATCIELCVKALRLESTENTEVKISICKTISCLLPEDLEVKRACQLSEFLIEPTVDAYYAVEMLYNQPDQKYDEENLPIPNSLRCELLLVLKTQWPFDPEFWDWKTLKRQCLALMGEEASIVSSIDELNDSEVYEKVDYQGERGDTSVNGLSAAGLGTDSGLLMDTGDEKQKKKEIKELKDRGFISARFRNWQAYMQYCLLCDKEFLGHRIVRHAQKHYKDGIYSCPICAKNFNSKDSFVPHVTLHVKQSSKERLAAMKPLRRLGRPPKITATHENQKTNINTVAKQEQRPIKKNSLYSTDFIVFNDNDGSDDENDDKDKSYEPEVIPVQKPVPVNEFNCPVTFCKKGFKYFKNLIAHVKGHKDSEDAKRFLEMQSKKVICQYCRRHFVSVTHLNDHLQMHCGSKPYICIQMKCKAGFNSYAELLAHRKEHQVFRAKCLFPKCGRIFSQAYLLYDHEAQHYNTYTCKFTGCGKVYRSQSEMEKHQDGHSHPETGLPPEDQLQPSGNDVNPDSGATAAGGRSENSIDKNLGSNRSADWEKNRAEPAVTKHGQISAAELRQANIPLSNGLETRDNTTVLRTNEVAVSIKVSVNHGVEGDFGKQENLTMEGTGEPLITDVHKPGIGAGVQLCHPGFQEKKGHECLNEAQNSLSNSESLKMDDLNPQSLERQVNTLMTFSVQNEAGLEDNSQICKFECGGDVKTSSSLYDLPLKTLESITFVQSQPDLSSPLGSPSVPPKAPGQKFSCQVEGCTRTYNSSQSIGKHMKTAHPDQYAAFKLQRKTKKGQKSNNLNTPNHGKCVYFLPSQVSSSNHAFFTPQTKANGNPACSAQVQHVSPSIFPAHLASVSAPLLPSVESVLSPNIPSQDKHGQDGILCSQMENLSNAPLPAQMEDLTKTVLPLNIDSGSDPFLPLPTENSSLFSSPADSENNSVFSQLENSTNHYPSQTDGNINSSFLKGGSSENGVFPSQVSSADDFSSTSAQPSTPKKVKKDRGRGPNGKERKPKHNKRAKWPAIIRDGKFICSRCYRAFTNPRSLGGHLSKRSYCKPLDGAEIAQELLQTNRQPSLLASMILSTSAVNMQQPQQSNFNPETCFKDPSFLQLLNVENRPTFLPSTFPRCDVSNFNASVSQEGSEIIKQALETAGIPSTFESAEMLSQVVPIGSVSDAAQVSAAGMPGPPVTPLLQTVCHPNTSPSNQNQTPNSKTLKECNSLPLFTTNDLLLKTIENGLCSNSFSSSTEPPQNFTNNSAHVSVISGPQNTRSSHLNKKGNSASKKRKKVAPAVSVSNTSQNVLPTDLPVGLPAKNLPVPDTNTRSDMTPDCEPRALVENLTQKLNNIDNHLFITDVKENCKASLEPHTMLTPLTLKTENGDSRMMPLSSCTPVNSDLQISEDNVIQNFEKTLEIIKTAMNSQILEVKSGSQGTGETTQNAQINYSMQLPSVNSIPDNKLPDASQCSSFLTVMPTKSEALHKEDQIQDILEGLQNLKLENDTSAPASQSMLMNKSVALSPTPTKSTPNIVVQPVPEVIHVQLNDRVNKPFVCQNQGCNYSAMTKDALFKHYGKIHQYTPEMILEIKKNQLKFAPFKCVVPSCTKTFTRNSNLRAHCQLVHHFTIEEMVKLKIKRPYGRKSQSENLSSPQNNQVKKQPSMAEETKTESQPAFKVPAATGDAALANATVIPEKQLAEKKSPEKPESSSQPVTSSAEQYNANLANLKTKGRKNKRHRKEKEEKREKNPVSQAFELPTKYSSYRPYCCVHQGCFAAFTIQQNLILHYQAVHKSNLPTFSAEVEEESEAVKESEETEPKQSMKEFRCQVSDCSRIFQAITGLIQHYMKLHEMTPEEIESMTAAVDVGKFPCDQLECKLSFTTYLSYVVHLEVDHGIGTRTSKAEEDGIYKCDCEGCDRIYATRSNLLRHIFNKHNDKHKAHLIRPRKLTGQENISSKANQEKSKSKHRTTKPNRSGKDGMKMPKTKRKKKSNLENKSAKVVQIEENKPYSLKRGKHVYSIKARNDALAECTSKFVTQYPCMIKGCTSVVTSESNIIRHYKCHKLSRAFTSQHRNILIVFKRYGNPQGKEISEQEDEKNDKKDPDSSVLEKNDNSEPAAAPQEEGRKGEKDEMDELTELFITKLINEDSTNAENQGNTTLKGNNEFQEHDSCTSERQKPGNLKRVYKEKNTVQSKKRKIDKTEPEVSLVVNNTRKEEEPAVAVQTTEEHPASFDWSSFKPMGFEASFLKFLEESAVKQKKNSDRDHSNSGSKRGSHSSSRRHVDKAAVAGSSHVCSCKDSEIFVQFANPSKLQCSENVKIVLDKTLKDRSELVLKQLQEMKPTVSLKKLEVLSNNPDRTVLKEISIGKATGRGQY</sequence>
<feature type="chain" id="PRO_0000392944" description="Zinc finger protein 292">
    <location>
        <begin position="1"/>
        <end position="2698"/>
    </location>
</feature>
<feature type="zinc finger region" description="C2H2-type 1" evidence="3">
    <location>
        <begin position="567"/>
        <end position="589"/>
    </location>
</feature>
<feature type="zinc finger region" description="C2H2-type 2" evidence="3">
    <location>
        <begin position="681"/>
        <end position="705"/>
    </location>
</feature>
<feature type="zinc finger region" description="C2H2-type 3" evidence="3">
    <location>
        <begin position="722"/>
        <end position="744"/>
    </location>
</feature>
<feature type="zinc finger region" description="C2H2-type 4" evidence="3">
    <location>
        <begin position="750"/>
        <end position="774"/>
    </location>
</feature>
<feature type="zinc finger region" description="C2H2-type 5" evidence="3">
    <location>
        <begin position="779"/>
        <end position="803"/>
    </location>
</feature>
<feature type="zinc finger region" description="C2H2-type 6" evidence="3">
    <location>
        <begin position="807"/>
        <end position="831"/>
    </location>
</feature>
<feature type="zinc finger region" description="C2H2-type 7" evidence="3">
    <location>
        <begin position="1085"/>
        <end position="1110"/>
    </location>
</feature>
<feature type="zinc finger region" description="C2H2-type 8; degenerate" evidence="3">
    <location>
        <begin position="1361"/>
        <end position="1383"/>
    </location>
</feature>
<feature type="zinc finger region" description="C2H2-type 9" evidence="3">
    <location>
        <begin position="1879"/>
        <end position="1904"/>
    </location>
</feature>
<feature type="zinc finger region" description="C2H2-type 10" evidence="3">
    <location>
        <begin position="1924"/>
        <end position="1949"/>
    </location>
</feature>
<feature type="zinc finger region" description="C2H2-type 11" evidence="3">
    <location>
        <begin position="2091"/>
        <end position="2116"/>
    </location>
</feature>
<feature type="zinc finger region" description="C2H2-type 12" evidence="3">
    <location>
        <begin position="2149"/>
        <end position="2174"/>
    </location>
</feature>
<feature type="zinc finger region" description="C2H2-type 13" evidence="3">
    <location>
        <begin position="2193"/>
        <end position="2218"/>
    </location>
</feature>
<feature type="zinc finger region" description="C2H2-type 14" evidence="3">
    <location>
        <begin position="2233"/>
        <end position="2258"/>
    </location>
</feature>
<feature type="zinc finger region" description="C2H2-type 15" evidence="3">
    <location>
        <begin position="2362"/>
        <end position="2386"/>
    </location>
</feature>
<feature type="region of interest" description="Disordered" evidence="4">
    <location>
        <begin position="822"/>
        <end position="894"/>
    </location>
</feature>
<feature type="region of interest" description="Disordered" evidence="4">
    <location>
        <begin position="1278"/>
        <end position="1349"/>
    </location>
</feature>
<feature type="region of interest" description="Disordered" evidence="4">
    <location>
        <begin position="1574"/>
        <end position="1656"/>
    </location>
</feature>
<feature type="region of interest" description="Disordered" evidence="4">
    <location>
        <begin position="1964"/>
        <end position="1997"/>
    </location>
</feature>
<feature type="region of interest" description="Disordered" evidence="4">
    <location>
        <begin position="2021"/>
        <end position="2075"/>
    </location>
</feature>
<feature type="region of interest" description="Disordered" evidence="4">
    <location>
        <begin position="2262"/>
        <end position="2323"/>
    </location>
</feature>
<feature type="region of interest" description="Disordered" evidence="4">
    <location>
        <begin position="2411"/>
        <end position="2454"/>
    </location>
</feature>
<feature type="region of interest" description="Disordered" evidence="4">
    <location>
        <begin position="2467"/>
        <end position="2553"/>
    </location>
</feature>
<feature type="region of interest" description="Disordered" evidence="4">
    <location>
        <begin position="2580"/>
        <end position="2608"/>
    </location>
</feature>
<feature type="compositionally biased region" description="Basic and acidic residues" evidence="4">
    <location>
        <begin position="822"/>
        <end position="834"/>
    </location>
</feature>
<feature type="compositionally biased region" description="Polar residues" evidence="4">
    <location>
        <begin position="1278"/>
        <end position="1325"/>
    </location>
</feature>
<feature type="compositionally biased region" description="Polar residues" evidence="4">
    <location>
        <begin position="1574"/>
        <end position="1603"/>
    </location>
</feature>
<feature type="compositionally biased region" description="Polar residues" evidence="4">
    <location>
        <begin position="1624"/>
        <end position="1633"/>
    </location>
</feature>
<feature type="compositionally biased region" description="Polar residues" evidence="4">
    <location>
        <begin position="1971"/>
        <end position="1984"/>
    </location>
</feature>
<feature type="compositionally biased region" description="Basic and acidic residues" evidence="4">
    <location>
        <begin position="2021"/>
        <end position="2032"/>
    </location>
</feature>
<feature type="compositionally biased region" description="Polar residues" evidence="4">
    <location>
        <begin position="2038"/>
        <end position="2051"/>
    </location>
</feature>
<feature type="compositionally biased region" description="Basic residues" evidence="4">
    <location>
        <begin position="2054"/>
        <end position="2064"/>
    </location>
</feature>
<feature type="compositionally biased region" description="Basic residues" evidence="4">
    <location>
        <begin position="2262"/>
        <end position="2271"/>
    </location>
</feature>
<feature type="compositionally biased region" description="Basic and acidic residues" evidence="4">
    <location>
        <begin position="2421"/>
        <end position="2437"/>
    </location>
</feature>
<feature type="compositionally biased region" description="Polar residues" evidence="4">
    <location>
        <begin position="2470"/>
        <end position="2488"/>
    </location>
</feature>
<feature type="compositionally biased region" description="Basic and acidic residues" evidence="4">
    <location>
        <begin position="2489"/>
        <end position="2501"/>
    </location>
</feature>
<feature type="compositionally biased region" description="Basic and acidic residues" evidence="4">
    <location>
        <begin position="2580"/>
        <end position="2590"/>
    </location>
</feature>
<feature type="compositionally biased region" description="Basic residues" evidence="4">
    <location>
        <begin position="2596"/>
        <end position="2606"/>
    </location>
</feature>
<feature type="modified residue" description="Phosphoserine" evidence="17">
    <location>
        <position position="654"/>
    </location>
</feature>
<feature type="modified residue" description="N6-acetyllysine" evidence="18">
    <location>
        <position position="1104"/>
    </location>
</feature>
<feature type="modified residue" description="Phosphoserine" evidence="1">
    <location>
        <position position="1146"/>
    </location>
</feature>
<feature type="modified residue" description="N6-acetyllysine" evidence="18">
    <location>
        <position position="2020"/>
    </location>
</feature>
<feature type="splice variant" id="VSP_053207" description="In isoform 2." evidence="7">
    <location>
        <begin position="178"/>
        <end position="182"/>
    </location>
</feature>
<feature type="sequence conflict" description="In Ref. 3; AAD01625." evidence="8" ref="3">
    <original>N</original>
    <variation>Y</variation>
    <location>
        <position position="1224"/>
    </location>
</feature>
<feature type="sequence conflict" description="In Ref. 2; AAH08537." evidence="8" ref="2">
    <original>LKG</original>
    <variation>HAS</variation>
    <location>
        <begin position="1296"/>
        <end position="1298"/>
    </location>
</feature>
<feature type="sequence conflict" description="In Ref. 2; AAH08537." evidence="8" ref="2">
    <original>V</original>
    <variation>L</variation>
    <location>
        <position position="1527"/>
    </location>
</feature>
<feature type="sequence conflict" description="In Ref. 3; AAD01625." evidence="8" ref="3">
    <original>A</original>
    <variation>S</variation>
    <location>
        <position position="1643"/>
    </location>
</feature>
<feature type="sequence conflict" description="In Ref. 3; AAD01625." evidence="8" ref="3">
    <original>P</original>
    <variation>T</variation>
    <location>
        <position position="1647"/>
    </location>
</feature>
<feature type="sequence conflict" description="In Ref. 2; AAH08537." evidence="8" ref="2">
    <original>R</original>
    <variation>Q</variation>
    <location>
        <position position="1664"/>
    </location>
</feature>
<feature type="sequence conflict" description="In Ref. 2; AAH08537." evidence="8" ref="2">
    <original>C</original>
    <variation>R</variation>
    <location>
        <position position="1690"/>
    </location>
</feature>
<feature type="sequence conflict" description="In Ref. 3; AAD01625." evidence="8" ref="3">
    <original>N</original>
    <variation>S</variation>
    <location>
        <position position="1787"/>
    </location>
</feature>
<feature type="sequence conflict" description="In Ref. 3; AAD01625." evidence="8" ref="3">
    <original>E</original>
    <variation>Q</variation>
    <location>
        <position position="2128"/>
    </location>
</feature>
<feature type="sequence conflict" description="In Ref. 2; AAH08537." evidence="8" ref="2">
    <original>A</original>
    <variation>T</variation>
    <location>
        <position position="2227"/>
    </location>
</feature>
<feature type="sequence conflict" description="In Ref. 3; AAD01625." evidence="8" ref="3">
    <original>K</original>
    <variation>R</variation>
    <location>
        <position position="2412"/>
    </location>
</feature>
<feature type="sequence conflict" description="In Ref. 3; AAD01625." evidence="8" ref="3">
    <original>D</original>
    <variation>G</variation>
    <location>
        <position position="2426"/>
    </location>
</feature>
<feature type="sequence conflict" description="In Ref. 2; AAH08537." evidence="8" ref="2">
    <original>N</original>
    <variation>T</variation>
    <location>
        <position position="2513"/>
    </location>
</feature>
<feature type="sequence conflict" description="In Ref. 4; BAC32648." evidence="8" ref="4">
    <original>H</original>
    <variation>D</variation>
    <location>
        <position position="2589"/>
    </location>
</feature>
<feature type="sequence conflict" description="In Ref. 2; AAH08537." evidence="8" ref="2">
    <original>S</original>
    <variation>C</variation>
    <location>
        <position position="2600"/>
    </location>
</feature>
<feature type="sequence conflict" description="In Ref. 2; AAH08537." evidence="8" ref="2">
    <original>D</original>
    <variation>A</variation>
    <location>
        <position position="2607"/>
    </location>
</feature>
<feature type="sequence conflict" description="In Ref. 2; AAH08537." evidence="8" ref="2">
    <original>A</original>
    <variation>V</variation>
    <location>
        <position position="2610"/>
    </location>
</feature>
<feature type="sequence conflict" description="In Ref. 2; AAH08537." evidence="8" ref="2">
    <original>IF</original>
    <variation>TL</variation>
    <location>
        <begin position="2625"/>
        <end position="2626"/>
    </location>
</feature>
<feature type="sequence conflict" description="In Ref. 2; AAH08537." evidence="8" ref="2">
    <original>D</original>
    <variation>H</variation>
    <location>
        <position position="2646"/>
    </location>
</feature>
<feature type="sequence conflict" description="In Ref. 3; AAD01625." evidence="8" ref="3">
    <original>N</original>
    <variation>S</variation>
    <location>
        <position position="2678"/>
    </location>
</feature>
<accession>Q9Z2U2</accession>
<accession>B1B0E1</accession>
<accession>B1B0E2</accession>
<accession>Q8BQX3</accession>
<accession>Q8BS87</accession>
<accession>Q8CGI6</accession>
<accession>Q922D3</accession>
<organism>
    <name type="scientific">Mus musculus</name>
    <name type="common">Mouse</name>
    <dbReference type="NCBI Taxonomy" id="10090"/>
    <lineage>
        <taxon>Eukaryota</taxon>
        <taxon>Metazoa</taxon>
        <taxon>Chordata</taxon>
        <taxon>Craniata</taxon>
        <taxon>Vertebrata</taxon>
        <taxon>Euteleostomi</taxon>
        <taxon>Mammalia</taxon>
        <taxon>Eutheria</taxon>
        <taxon>Euarchontoglires</taxon>
        <taxon>Glires</taxon>
        <taxon>Rodentia</taxon>
        <taxon>Myomorpha</taxon>
        <taxon>Muroidea</taxon>
        <taxon>Muridae</taxon>
        <taxon>Murinae</taxon>
        <taxon>Mus</taxon>
        <taxon>Mus</taxon>
    </lineage>
</organism>
<name>ZN292_MOUSE</name>
<keyword id="KW-0007">Acetylation</keyword>
<keyword id="KW-0025">Alternative splicing</keyword>
<keyword id="KW-0238">DNA-binding</keyword>
<keyword id="KW-0479">Metal-binding</keyword>
<keyword id="KW-0539">Nucleus</keyword>
<keyword id="KW-0597">Phosphoprotein</keyword>
<keyword id="KW-1185">Reference proteome</keyword>
<keyword id="KW-0677">Repeat</keyword>
<keyword id="KW-0804">Transcription</keyword>
<keyword id="KW-0805">Transcription regulation</keyword>
<keyword id="KW-0862">Zinc</keyword>
<keyword id="KW-0863">Zinc-finger</keyword>
<evidence type="ECO:0000250" key="1">
    <source>
        <dbReference type="UniProtKB" id="O60281"/>
    </source>
</evidence>
<evidence type="ECO:0000255" key="2"/>
<evidence type="ECO:0000255" key="3">
    <source>
        <dbReference type="PROSITE-ProRule" id="PRU00042"/>
    </source>
</evidence>
<evidence type="ECO:0000256" key="4">
    <source>
        <dbReference type="SAM" id="MobiDB-lite"/>
    </source>
</evidence>
<evidence type="ECO:0000269" key="5">
    <source>
    </source>
</evidence>
<evidence type="ECO:0000269" key="6">
    <source>
    </source>
</evidence>
<evidence type="ECO:0000303" key="7">
    <source>
    </source>
</evidence>
<evidence type="ECO:0000305" key="8"/>
<evidence type="ECO:0000312" key="9">
    <source>
        <dbReference type="EMBL" id="AAD01625.1"/>
    </source>
</evidence>
<evidence type="ECO:0000312" key="10">
    <source>
        <dbReference type="EMBL" id="AAH08537.1"/>
    </source>
</evidence>
<evidence type="ECO:0000312" key="11">
    <source>
        <dbReference type="EMBL" id="AAH36997.1"/>
    </source>
</evidence>
<evidence type="ECO:0000312" key="12">
    <source>
        <dbReference type="EMBL" id="BAC28892.1"/>
    </source>
</evidence>
<evidence type="ECO:0000312" key="13">
    <source>
        <dbReference type="EMBL" id="BAC32648.1"/>
    </source>
</evidence>
<evidence type="ECO:0000312" key="14">
    <source>
        <dbReference type="EMBL" id="CAM27815.1"/>
    </source>
</evidence>
<evidence type="ECO:0000312" key="15">
    <source>
        <dbReference type="EMBL" id="CAM27828.1"/>
    </source>
</evidence>
<evidence type="ECO:0000312" key="16">
    <source>
        <dbReference type="MGI" id="MGI:1353423"/>
    </source>
</evidence>
<evidence type="ECO:0007744" key="17">
    <source>
    </source>
</evidence>
<evidence type="ECO:0007744" key="18">
    <source>
    </source>
</evidence>
<protein>
    <recommendedName>
        <fullName evidence="15 16">Zinc finger protein 292</fullName>
    </recommendedName>
    <alternativeName>
        <fullName>Zinc finger protein 15</fullName>
        <shortName evidence="9">Zfp-15</shortName>
    </alternativeName>
</protein>
<reference evidence="14" key="1">
    <citation type="journal article" date="2009" name="PLoS Biol.">
        <title>Lineage-specific biology revealed by a finished genome assembly of the mouse.</title>
        <authorList>
            <person name="Church D.M."/>
            <person name="Goodstadt L."/>
            <person name="Hillier L.W."/>
            <person name="Zody M.C."/>
            <person name="Goldstein S."/>
            <person name="She X."/>
            <person name="Bult C.J."/>
            <person name="Agarwala R."/>
            <person name="Cherry J.L."/>
            <person name="DiCuccio M."/>
            <person name="Hlavina W."/>
            <person name="Kapustin Y."/>
            <person name="Meric P."/>
            <person name="Maglott D."/>
            <person name="Birtle Z."/>
            <person name="Marques A.C."/>
            <person name="Graves T."/>
            <person name="Zhou S."/>
            <person name="Teague B."/>
            <person name="Potamousis K."/>
            <person name="Churas C."/>
            <person name="Place M."/>
            <person name="Herschleb J."/>
            <person name="Runnheim R."/>
            <person name="Forrest D."/>
            <person name="Amos-Landgraf J."/>
            <person name="Schwartz D.C."/>
            <person name="Cheng Z."/>
            <person name="Lindblad-Toh K."/>
            <person name="Eichler E.E."/>
            <person name="Ponting C.P."/>
        </authorList>
    </citation>
    <scope>NUCLEOTIDE SEQUENCE [LARGE SCALE GENOMIC DNA]</scope>
    <source>
        <strain>C57BL/6J</strain>
    </source>
</reference>
<reference evidence="8 11" key="2">
    <citation type="journal article" date="2004" name="Genome Res.">
        <title>The status, quality, and expansion of the NIH full-length cDNA project: the Mammalian Gene Collection (MGC).</title>
        <authorList>
            <consortium name="The MGC Project Team"/>
        </authorList>
    </citation>
    <scope>NUCLEOTIDE SEQUENCE [LARGE SCALE MRNA] OF 1-520 (ISOFORM 1)</scope>
    <scope>NUCLEOTIDE SEQUENCE [LARGE SCALE MRNA] OF 1296-2698 (ISOFORMS 1/2)</scope>
    <source>
        <strain evidence="11">Czech II</strain>
        <tissue evidence="11">Mammary tumor</tissue>
    </source>
</reference>
<reference evidence="8 9" key="3">
    <citation type="journal article" date="2000" name="Mol. Cell. Endocrinol.">
        <title>Mouse growth hormone transcription factor Zn-16: unique bipartite structure containing tandemly repeated zinc finger domains not reported in rat Zn-15.</title>
        <authorList>
            <person name="VanderHeyden T.C."/>
            <person name="Wojtkiewicz P.W."/>
            <person name="Voss T.C."/>
            <person name="Mangin T.M."/>
            <person name="Harrelson Z."/>
            <person name="Ahlers K.M."/>
            <person name="Phelps C.J."/>
            <person name="Hurley D.L."/>
        </authorList>
    </citation>
    <scope>NUCLEOTIDE SEQUENCE [MRNA] OF 502-2698 (ISOFORMS 1/2)</scope>
    <scope>TISSUE SPECIFICITY</scope>
</reference>
<reference evidence="8 12" key="4">
    <citation type="journal article" date="2005" name="Science">
        <title>The transcriptional landscape of the mammalian genome.</title>
        <authorList>
            <person name="Carninci P."/>
            <person name="Kasukawa T."/>
            <person name="Katayama S."/>
            <person name="Gough J."/>
            <person name="Frith M.C."/>
            <person name="Maeda N."/>
            <person name="Oyama R."/>
            <person name="Ravasi T."/>
            <person name="Lenhard B."/>
            <person name="Wells C."/>
            <person name="Kodzius R."/>
            <person name="Shimokawa K."/>
            <person name="Bajic V.B."/>
            <person name="Brenner S.E."/>
            <person name="Batalov S."/>
            <person name="Forrest A.R."/>
            <person name="Zavolan M."/>
            <person name="Davis M.J."/>
            <person name="Wilming L.G."/>
            <person name="Aidinis V."/>
            <person name="Allen J.E."/>
            <person name="Ambesi-Impiombato A."/>
            <person name="Apweiler R."/>
            <person name="Aturaliya R.N."/>
            <person name="Bailey T.L."/>
            <person name="Bansal M."/>
            <person name="Baxter L."/>
            <person name="Beisel K.W."/>
            <person name="Bersano T."/>
            <person name="Bono H."/>
            <person name="Chalk A.M."/>
            <person name="Chiu K.P."/>
            <person name="Choudhary V."/>
            <person name="Christoffels A."/>
            <person name="Clutterbuck D.R."/>
            <person name="Crowe M.L."/>
            <person name="Dalla E."/>
            <person name="Dalrymple B.P."/>
            <person name="de Bono B."/>
            <person name="Della Gatta G."/>
            <person name="di Bernardo D."/>
            <person name="Down T."/>
            <person name="Engstrom P."/>
            <person name="Fagiolini M."/>
            <person name="Faulkner G."/>
            <person name="Fletcher C.F."/>
            <person name="Fukushima T."/>
            <person name="Furuno M."/>
            <person name="Futaki S."/>
            <person name="Gariboldi M."/>
            <person name="Georgii-Hemming P."/>
            <person name="Gingeras T.R."/>
            <person name="Gojobori T."/>
            <person name="Green R.E."/>
            <person name="Gustincich S."/>
            <person name="Harbers M."/>
            <person name="Hayashi Y."/>
            <person name="Hensch T.K."/>
            <person name="Hirokawa N."/>
            <person name="Hill D."/>
            <person name="Huminiecki L."/>
            <person name="Iacono M."/>
            <person name="Ikeo K."/>
            <person name="Iwama A."/>
            <person name="Ishikawa T."/>
            <person name="Jakt M."/>
            <person name="Kanapin A."/>
            <person name="Katoh M."/>
            <person name="Kawasawa Y."/>
            <person name="Kelso J."/>
            <person name="Kitamura H."/>
            <person name="Kitano H."/>
            <person name="Kollias G."/>
            <person name="Krishnan S.P."/>
            <person name="Kruger A."/>
            <person name="Kummerfeld S.K."/>
            <person name="Kurochkin I.V."/>
            <person name="Lareau L.F."/>
            <person name="Lazarevic D."/>
            <person name="Lipovich L."/>
            <person name="Liu J."/>
            <person name="Liuni S."/>
            <person name="McWilliam S."/>
            <person name="Madan Babu M."/>
            <person name="Madera M."/>
            <person name="Marchionni L."/>
            <person name="Matsuda H."/>
            <person name="Matsuzawa S."/>
            <person name="Miki H."/>
            <person name="Mignone F."/>
            <person name="Miyake S."/>
            <person name="Morris K."/>
            <person name="Mottagui-Tabar S."/>
            <person name="Mulder N."/>
            <person name="Nakano N."/>
            <person name="Nakauchi H."/>
            <person name="Ng P."/>
            <person name="Nilsson R."/>
            <person name="Nishiguchi S."/>
            <person name="Nishikawa S."/>
            <person name="Nori F."/>
            <person name="Ohara O."/>
            <person name="Okazaki Y."/>
            <person name="Orlando V."/>
            <person name="Pang K.C."/>
            <person name="Pavan W.J."/>
            <person name="Pavesi G."/>
            <person name="Pesole G."/>
            <person name="Petrovsky N."/>
            <person name="Piazza S."/>
            <person name="Reed J."/>
            <person name="Reid J.F."/>
            <person name="Ring B.Z."/>
            <person name="Ringwald M."/>
            <person name="Rost B."/>
            <person name="Ruan Y."/>
            <person name="Salzberg S.L."/>
            <person name="Sandelin A."/>
            <person name="Schneider C."/>
            <person name="Schoenbach C."/>
            <person name="Sekiguchi K."/>
            <person name="Semple C.A."/>
            <person name="Seno S."/>
            <person name="Sessa L."/>
            <person name="Sheng Y."/>
            <person name="Shibata Y."/>
            <person name="Shimada H."/>
            <person name="Shimada K."/>
            <person name="Silva D."/>
            <person name="Sinclair B."/>
            <person name="Sperling S."/>
            <person name="Stupka E."/>
            <person name="Sugiura K."/>
            <person name="Sultana R."/>
            <person name="Takenaka Y."/>
            <person name="Taki K."/>
            <person name="Tammoja K."/>
            <person name="Tan S.L."/>
            <person name="Tang S."/>
            <person name="Taylor M.S."/>
            <person name="Tegner J."/>
            <person name="Teichmann S.A."/>
            <person name="Ueda H.R."/>
            <person name="van Nimwegen E."/>
            <person name="Verardo R."/>
            <person name="Wei C.L."/>
            <person name="Yagi K."/>
            <person name="Yamanishi H."/>
            <person name="Zabarovsky E."/>
            <person name="Zhu S."/>
            <person name="Zimmer A."/>
            <person name="Hide W."/>
            <person name="Bult C."/>
            <person name="Grimmond S.M."/>
            <person name="Teasdale R.D."/>
            <person name="Liu E.T."/>
            <person name="Brusic V."/>
            <person name="Quackenbush J."/>
            <person name="Wahlestedt C."/>
            <person name="Mattick J.S."/>
            <person name="Hume D.A."/>
            <person name="Kai C."/>
            <person name="Sasaki D."/>
            <person name="Tomaru Y."/>
            <person name="Fukuda S."/>
            <person name="Kanamori-Katayama M."/>
            <person name="Suzuki M."/>
            <person name="Aoki J."/>
            <person name="Arakawa T."/>
            <person name="Iida J."/>
            <person name="Imamura K."/>
            <person name="Itoh M."/>
            <person name="Kato T."/>
            <person name="Kawaji H."/>
            <person name="Kawagashira N."/>
            <person name="Kawashima T."/>
            <person name="Kojima M."/>
            <person name="Kondo S."/>
            <person name="Konno H."/>
            <person name="Nakano K."/>
            <person name="Ninomiya N."/>
            <person name="Nishio T."/>
            <person name="Okada M."/>
            <person name="Plessy C."/>
            <person name="Shibata K."/>
            <person name="Shiraki T."/>
            <person name="Suzuki S."/>
            <person name="Tagami M."/>
            <person name="Waki K."/>
            <person name="Watahiki A."/>
            <person name="Okamura-Oho Y."/>
            <person name="Suzuki H."/>
            <person name="Kawai J."/>
            <person name="Hayashizaki Y."/>
        </authorList>
    </citation>
    <scope>NUCLEOTIDE SEQUENCE [LARGE SCALE MRNA] OF 1999-2698 (ISOFORMS 1/2)</scope>
    <source>
        <strain evidence="12">C57BL/6J</strain>
        <tissue evidence="13">Corpora quadrigemina</tissue>
        <tissue evidence="12">Embryo</tissue>
    </source>
</reference>
<reference key="5">
    <citation type="journal article" date="2010" name="Cell">
        <title>A tissue-specific atlas of mouse protein phosphorylation and expression.</title>
        <authorList>
            <person name="Huttlin E.L."/>
            <person name="Jedrychowski M.P."/>
            <person name="Elias J.E."/>
            <person name="Goswami T."/>
            <person name="Rad R."/>
            <person name="Beausoleil S.A."/>
            <person name="Villen J."/>
            <person name="Haas W."/>
            <person name="Sowa M.E."/>
            <person name="Gygi S.P."/>
        </authorList>
    </citation>
    <scope>PHOSPHORYLATION [LARGE SCALE ANALYSIS] AT SER-654</scope>
    <scope>IDENTIFICATION BY MASS SPECTROMETRY [LARGE SCALE ANALYSIS]</scope>
    <source>
        <tissue>Spleen</tissue>
    </source>
</reference>
<reference key="6">
    <citation type="journal article" date="2013" name="Mol. Cell">
        <title>SIRT5-mediated lysine desuccinylation impacts diverse metabolic pathways.</title>
        <authorList>
            <person name="Park J."/>
            <person name="Chen Y."/>
            <person name="Tishkoff D.X."/>
            <person name="Peng C."/>
            <person name="Tan M."/>
            <person name="Dai L."/>
            <person name="Xie Z."/>
            <person name="Zhang Y."/>
            <person name="Zwaans B.M."/>
            <person name="Skinner M.E."/>
            <person name="Lombard D.B."/>
            <person name="Zhao Y."/>
        </authorList>
    </citation>
    <scope>ACETYLATION [LARGE SCALE ANALYSIS] AT LYS-1104 AND LYS-2020</scope>
    <scope>IDENTIFICATION BY MASS SPECTROMETRY [LARGE SCALE ANALYSIS]</scope>
    <source>
        <tissue>Embryonic fibroblast</tissue>
    </source>
</reference>
<gene>
    <name evidence="10 16" type="primary">Zfp292</name>
    <name evidence="9" type="synonym">Zfp15</name>
</gene>
<dbReference type="EMBL" id="BX465850">
    <property type="protein sequence ID" value="CAM27828.1"/>
    <property type="molecule type" value="Genomic_DNA"/>
</dbReference>
<dbReference type="EMBL" id="BX649603">
    <property type="protein sequence ID" value="CAM27828.1"/>
    <property type="status" value="JOINED"/>
    <property type="molecule type" value="Genomic_DNA"/>
</dbReference>
<dbReference type="EMBL" id="BX465850">
    <property type="protein sequence ID" value="CAM27829.1"/>
    <property type="molecule type" value="Genomic_DNA"/>
</dbReference>
<dbReference type="EMBL" id="BX649603">
    <property type="protein sequence ID" value="CAM27829.1"/>
    <property type="status" value="JOINED"/>
    <property type="molecule type" value="Genomic_DNA"/>
</dbReference>
<dbReference type="EMBL" id="BX649603">
    <property type="protein sequence ID" value="CAM27815.1"/>
    <property type="molecule type" value="Genomic_DNA"/>
</dbReference>
<dbReference type="EMBL" id="BX465850">
    <property type="protein sequence ID" value="CAM27815.1"/>
    <property type="status" value="JOINED"/>
    <property type="molecule type" value="Genomic_DNA"/>
</dbReference>
<dbReference type="EMBL" id="BX649603">
    <property type="protein sequence ID" value="CAM27816.1"/>
    <property type="molecule type" value="Genomic_DNA"/>
</dbReference>
<dbReference type="EMBL" id="BX465850">
    <property type="protein sequence ID" value="CAM27816.1"/>
    <property type="status" value="JOINED"/>
    <property type="molecule type" value="Genomic_DNA"/>
</dbReference>
<dbReference type="EMBL" id="BC008537">
    <property type="protein sequence ID" value="AAH08537.1"/>
    <property type="molecule type" value="mRNA"/>
</dbReference>
<dbReference type="EMBL" id="BC036997">
    <property type="protein sequence ID" value="AAH36997.1"/>
    <property type="status" value="ALT_SEQ"/>
    <property type="molecule type" value="mRNA"/>
</dbReference>
<dbReference type="EMBL" id="AF017806">
    <property type="protein sequence ID" value="AAD01625.1"/>
    <property type="status" value="ALT_INIT"/>
    <property type="molecule type" value="mRNA"/>
</dbReference>
<dbReference type="EMBL" id="AK034951">
    <property type="protein sequence ID" value="BAC28892.1"/>
    <property type="status" value="ALT_INIT"/>
    <property type="molecule type" value="mRNA"/>
</dbReference>
<dbReference type="EMBL" id="AK046236">
    <property type="protein sequence ID" value="BAC32648.1"/>
    <property type="status" value="ALT_INIT"/>
    <property type="molecule type" value="mRNA"/>
</dbReference>
<dbReference type="CCDS" id="CCDS51138.1">
    <molecule id="Q9Z2U2-1"/>
</dbReference>
<dbReference type="RefSeq" id="NP_001416767.1">
    <molecule id="Q9Z2U2-2"/>
    <property type="nucleotide sequence ID" value="NM_001429838.1"/>
</dbReference>
<dbReference type="RefSeq" id="NP_038917.2">
    <molecule id="Q9Z2U2-1"/>
    <property type="nucleotide sequence ID" value="NM_013889.3"/>
</dbReference>
<dbReference type="BioGRID" id="205950">
    <property type="interactions" value="17"/>
</dbReference>
<dbReference type="FunCoup" id="Q9Z2U2">
    <property type="interactions" value="4065"/>
</dbReference>
<dbReference type="IntAct" id="Q9Z2U2">
    <property type="interactions" value="15"/>
</dbReference>
<dbReference type="MINT" id="Q9Z2U2"/>
<dbReference type="STRING" id="10090.ENSMUSP00000037233"/>
<dbReference type="GlyGen" id="Q9Z2U2">
    <property type="glycosylation" value="3 sites, 1 O-linked glycan (2 sites)"/>
</dbReference>
<dbReference type="iPTMnet" id="Q9Z2U2"/>
<dbReference type="PhosphoSitePlus" id="Q9Z2U2"/>
<dbReference type="jPOST" id="Q9Z2U2"/>
<dbReference type="PaxDb" id="10090-ENSMUSP00000037233"/>
<dbReference type="PeptideAtlas" id="Q9Z2U2"/>
<dbReference type="ProteomicsDB" id="302077">
    <molecule id="Q9Z2U2-1"/>
</dbReference>
<dbReference type="ProteomicsDB" id="302078">
    <molecule id="Q9Z2U2-2"/>
</dbReference>
<dbReference type="Pumba" id="Q9Z2U2"/>
<dbReference type="Antibodypedia" id="31770">
    <property type="antibodies" value="53 antibodies from 17 providers"/>
</dbReference>
<dbReference type="DNASU" id="30046"/>
<dbReference type="Ensembl" id="ENSMUST00000047950.6">
    <molecule id="Q9Z2U2-1"/>
    <property type="protein sequence ID" value="ENSMUSP00000037233.6"/>
    <property type="gene ID" value="ENSMUSG00000039967.15"/>
</dbReference>
<dbReference type="Ensembl" id="ENSMUST00000098163.9">
    <molecule id="Q9Z2U2-2"/>
    <property type="protein sequence ID" value="ENSMUSP00000095766.3"/>
    <property type="gene ID" value="ENSMUSG00000039967.15"/>
</dbReference>
<dbReference type="GeneID" id="30046"/>
<dbReference type="KEGG" id="mmu:30046"/>
<dbReference type="UCSC" id="uc008sgn.2">
    <molecule id="Q9Z2U2-1"/>
    <property type="organism name" value="mouse"/>
</dbReference>
<dbReference type="UCSC" id="uc012dbp.1">
    <molecule id="Q9Z2U2-2"/>
    <property type="organism name" value="mouse"/>
</dbReference>
<dbReference type="AGR" id="MGI:1353423"/>
<dbReference type="CTD" id="30046"/>
<dbReference type="MGI" id="MGI:1353423">
    <property type="gene designation" value="Zfp292"/>
</dbReference>
<dbReference type="VEuPathDB" id="HostDB:ENSMUSG00000039967"/>
<dbReference type="eggNOG" id="KOG1721">
    <property type="taxonomic scope" value="Eukaryota"/>
</dbReference>
<dbReference type="GeneTree" id="ENSGT00950000183034"/>
<dbReference type="HOGENOM" id="CLU_000520_0_0_1"/>
<dbReference type="InParanoid" id="Q9Z2U2"/>
<dbReference type="OMA" id="LIVFKQC"/>
<dbReference type="OrthoDB" id="427030at2759"/>
<dbReference type="PhylomeDB" id="Q9Z2U2"/>
<dbReference type="TreeFam" id="TF350813"/>
<dbReference type="BioGRID-ORCS" id="30046">
    <property type="hits" value="3 hits in 79 CRISPR screens"/>
</dbReference>
<dbReference type="ChiTaRS" id="Zfp292">
    <property type="organism name" value="mouse"/>
</dbReference>
<dbReference type="PRO" id="PR:Q9Z2U2"/>
<dbReference type="Proteomes" id="UP000000589">
    <property type="component" value="Chromosome 4"/>
</dbReference>
<dbReference type="RNAct" id="Q9Z2U2">
    <property type="molecule type" value="protein"/>
</dbReference>
<dbReference type="Bgee" id="ENSMUSG00000039967">
    <property type="expression patterns" value="Expressed in rostral migratory stream and 270 other cell types or tissues"/>
</dbReference>
<dbReference type="GO" id="GO:0005634">
    <property type="term" value="C:nucleus"/>
    <property type="evidence" value="ECO:0007669"/>
    <property type="project" value="UniProtKB-SubCell"/>
</dbReference>
<dbReference type="GO" id="GO:0003677">
    <property type="term" value="F:DNA binding"/>
    <property type="evidence" value="ECO:0007669"/>
    <property type="project" value="UniProtKB-KW"/>
</dbReference>
<dbReference type="GO" id="GO:0001228">
    <property type="term" value="F:DNA-binding transcription activator activity, RNA polymerase II-specific"/>
    <property type="evidence" value="ECO:0007669"/>
    <property type="project" value="Ensembl"/>
</dbReference>
<dbReference type="GO" id="GO:0008270">
    <property type="term" value="F:zinc ion binding"/>
    <property type="evidence" value="ECO:0007669"/>
    <property type="project" value="UniProtKB-KW"/>
</dbReference>
<dbReference type="FunFam" id="3.30.160.60:FF:001293">
    <property type="entry name" value="Zinc finger protein 292"/>
    <property type="match status" value="1"/>
</dbReference>
<dbReference type="Gene3D" id="3.30.160.60">
    <property type="entry name" value="Classic Zinc Finger"/>
    <property type="match status" value="3"/>
</dbReference>
<dbReference type="InterPro" id="IPR052251">
    <property type="entry name" value="GH-ZnFinger_Regulators"/>
</dbReference>
<dbReference type="InterPro" id="IPR036236">
    <property type="entry name" value="Znf_C2H2_sf"/>
</dbReference>
<dbReference type="InterPro" id="IPR013087">
    <property type="entry name" value="Znf_C2H2_type"/>
</dbReference>
<dbReference type="PANTHER" id="PTHR15507:SF14">
    <property type="entry name" value="ZINC FINGER PROTEIN 292"/>
    <property type="match status" value="1"/>
</dbReference>
<dbReference type="PANTHER" id="PTHR15507">
    <property type="entry name" value="ZINC FINGER PROTEIN RLF"/>
    <property type="match status" value="1"/>
</dbReference>
<dbReference type="Pfam" id="PF00096">
    <property type="entry name" value="zf-C2H2"/>
    <property type="match status" value="1"/>
</dbReference>
<dbReference type="Pfam" id="PF25420">
    <property type="entry name" value="zf-C2H2_ZN292"/>
    <property type="match status" value="1"/>
</dbReference>
<dbReference type="SMART" id="SM00355">
    <property type="entry name" value="ZnF_C2H2"/>
    <property type="match status" value="16"/>
</dbReference>
<dbReference type="SUPFAM" id="SSF57667">
    <property type="entry name" value="beta-beta-alpha zinc fingers"/>
    <property type="match status" value="3"/>
</dbReference>
<dbReference type="PROSITE" id="PS00028">
    <property type="entry name" value="ZINC_FINGER_C2H2_1"/>
    <property type="match status" value="13"/>
</dbReference>
<dbReference type="PROSITE" id="PS50157">
    <property type="entry name" value="ZINC_FINGER_C2H2_2"/>
    <property type="match status" value="12"/>
</dbReference>